<gene>
    <name type="primary">Tpd52l2</name>
</gene>
<keyword id="KW-0007">Acetylation</keyword>
<keyword id="KW-0175">Coiled coil</keyword>
<keyword id="KW-0597">Phosphoprotein</keyword>
<keyword id="KW-1185">Reference proteome</keyword>
<accession>Q9CYZ2</accession>
<accession>Q3TVY1</accession>
<comment type="subunit">
    <text evidence="1">Forms a homodimer or heterodimer with other members of the family. Interacts with MAL2 (By similarity).</text>
</comment>
<comment type="similarity">
    <text evidence="5">Belongs to the TPD52 family.</text>
</comment>
<dbReference type="EMBL" id="AK013188">
    <property type="protein sequence ID" value="BAB28701.1"/>
    <property type="molecule type" value="mRNA"/>
</dbReference>
<dbReference type="EMBL" id="AK159925">
    <property type="protein sequence ID" value="BAE35487.1"/>
    <property type="molecule type" value="mRNA"/>
</dbReference>
<dbReference type="EMBL" id="BC006886">
    <property type="protein sequence ID" value="AAH06886.1"/>
    <property type="molecule type" value="mRNA"/>
</dbReference>
<dbReference type="CCDS" id="CCDS17214.1"/>
<dbReference type="RefSeq" id="NP_001278126.1">
    <property type="nucleotide sequence ID" value="NM_001291197.1"/>
</dbReference>
<dbReference type="RefSeq" id="NP_079758.2">
    <property type="nucleotide sequence ID" value="NM_025482.3"/>
</dbReference>
<dbReference type="SMR" id="Q9CYZ2"/>
<dbReference type="BioGRID" id="211377">
    <property type="interactions" value="32"/>
</dbReference>
<dbReference type="FunCoup" id="Q9CYZ2">
    <property type="interactions" value="3245"/>
</dbReference>
<dbReference type="IntAct" id="Q9CYZ2">
    <property type="interactions" value="2"/>
</dbReference>
<dbReference type="STRING" id="10090.ENSMUSP00000117690"/>
<dbReference type="GlyGen" id="Q9CYZ2">
    <property type="glycosylation" value="5 sites, 1 O-linked glycan (5 sites)"/>
</dbReference>
<dbReference type="iPTMnet" id="Q9CYZ2"/>
<dbReference type="PhosphoSitePlus" id="Q9CYZ2"/>
<dbReference type="jPOST" id="Q9CYZ2"/>
<dbReference type="PaxDb" id="10090-ENSMUSP00000117690"/>
<dbReference type="PeptideAtlas" id="Q9CYZ2"/>
<dbReference type="ProteomicsDB" id="297505"/>
<dbReference type="Pumba" id="Q9CYZ2"/>
<dbReference type="Antibodypedia" id="29897">
    <property type="antibodies" value="230 antibodies from 33 providers"/>
</dbReference>
<dbReference type="DNASU" id="66314"/>
<dbReference type="Ensembl" id="ENSMUST00000149163.8">
    <property type="protein sequence ID" value="ENSMUSP00000117690.2"/>
    <property type="gene ID" value="ENSMUSG00000000827.19"/>
</dbReference>
<dbReference type="GeneID" id="66314"/>
<dbReference type="KEGG" id="mmu:66314"/>
<dbReference type="UCSC" id="uc008oml.2">
    <property type="organism name" value="mouse"/>
</dbReference>
<dbReference type="AGR" id="MGI:1913564"/>
<dbReference type="CTD" id="7165"/>
<dbReference type="MGI" id="MGI:1913564">
    <property type="gene designation" value="Tpd52l2"/>
</dbReference>
<dbReference type="VEuPathDB" id="HostDB:ENSMUSG00000000827"/>
<dbReference type="eggNOG" id="KOG4010">
    <property type="taxonomic scope" value="Eukaryota"/>
</dbReference>
<dbReference type="GeneTree" id="ENSGT00940000155572"/>
<dbReference type="InParanoid" id="Q9CYZ2"/>
<dbReference type="PhylomeDB" id="Q9CYZ2"/>
<dbReference type="TreeFam" id="TF317562"/>
<dbReference type="BioGRID-ORCS" id="66314">
    <property type="hits" value="1 hit in 76 CRISPR screens"/>
</dbReference>
<dbReference type="ChiTaRS" id="Tpd52l2">
    <property type="organism name" value="mouse"/>
</dbReference>
<dbReference type="PRO" id="PR:Q9CYZ2"/>
<dbReference type="Proteomes" id="UP000000589">
    <property type="component" value="Chromosome 2"/>
</dbReference>
<dbReference type="RNAct" id="Q9CYZ2">
    <property type="molecule type" value="protein"/>
</dbReference>
<dbReference type="Bgee" id="ENSMUSG00000000827">
    <property type="expression patterns" value="Expressed in saccule of membranous labyrinth and 267 other cell types or tissues"/>
</dbReference>
<dbReference type="ExpressionAtlas" id="Q9CYZ2">
    <property type="expression patterns" value="baseline and differential"/>
</dbReference>
<dbReference type="GO" id="GO:0005737">
    <property type="term" value="C:cytoplasm"/>
    <property type="evidence" value="ECO:0000250"/>
    <property type="project" value="UniProtKB"/>
</dbReference>
<dbReference type="GO" id="GO:0048471">
    <property type="term" value="C:perinuclear region of cytoplasm"/>
    <property type="evidence" value="ECO:0000250"/>
    <property type="project" value="UniProtKB"/>
</dbReference>
<dbReference type="InterPro" id="IPR007327">
    <property type="entry name" value="TPD52"/>
</dbReference>
<dbReference type="PANTHER" id="PTHR19307">
    <property type="entry name" value="TUMOR PROTEIN D52"/>
    <property type="match status" value="1"/>
</dbReference>
<dbReference type="PANTHER" id="PTHR19307:SF13">
    <property type="entry name" value="TUMOR PROTEIN D54"/>
    <property type="match status" value="1"/>
</dbReference>
<dbReference type="Pfam" id="PF04201">
    <property type="entry name" value="TPD52"/>
    <property type="match status" value="2"/>
</dbReference>
<protein>
    <recommendedName>
        <fullName>Tumor protein D54</fullName>
    </recommendedName>
    <alternativeName>
        <fullName>Tumor protein D52-like 2</fullName>
    </alternativeName>
</protein>
<sequence length="220" mass="24043">MDSASQDINLNSPNKGVLSDFMTDVPVDPGVVHRTPVVEGLTEGEEEELRAELAKVEEEIVTLRQVLAAKERHCGELKRRLGLSTLGELKQNLSRSWHDVQVSTAYVKTSEKLGEWNEKVTQSDLYKKTQETLSQAGQKTSAALSTMGSAISRKLGDMSSYSIRHSISMPVMRNSATFKSFEDRVGTIKSKVVGGRENGSDNLPPSPGSGDQTLPDHAPF</sequence>
<feature type="chain" id="PRO_0000185745" description="Tumor protein D54">
    <location>
        <begin position="1"/>
        <end position="220"/>
    </location>
</feature>
<feature type="region of interest" description="Disordered" evidence="4">
    <location>
        <begin position="189"/>
        <end position="220"/>
    </location>
</feature>
<feature type="coiled-coil region" evidence="3">
    <location>
        <begin position="40"/>
        <end position="82"/>
    </location>
</feature>
<feature type="modified residue" description="N-acetylmethionine" evidence="2">
    <location>
        <position position="1"/>
    </location>
</feature>
<feature type="modified residue" description="Phosphoserine" evidence="2">
    <location>
        <position position="3"/>
    </location>
</feature>
<feature type="modified residue" description="Phosphoserine" evidence="2">
    <location>
        <position position="12"/>
    </location>
</feature>
<feature type="modified residue" description="Phosphoserine" evidence="2">
    <location>
        <position position="19"/>
    </location>
</feature>
<feature type="modified residue" description="Phosphoserine" evidence="9">
    <location>
        <position position="96"/>
    </location>
</feature>
<feature type="modified residue" description="Phosphoserine" evidence="2">
    <location>
        <position position="149"/>
    </location>
</feature>
<feature type="modified residue" description="Phosphoserine" evidence="9">
    <location>
        <position position="168"/>
    </location>
</feature>
<feature type="modified residue" description="Phosphoserine" evidence="2">
    <location>
        <position position="175"/>
    </location>
</feature>
<feature type="modified residue" description="Phosphothreonine" evidence="2">
    <location>
        <position position="177"/>
    </location>
</feature>
<feature type="modified residue" description="Phosphoserine" evidence="7 8 9">
    <location>
        <position position="180"/>
    </location>
</feature>
<feature type="modified residue" description="Phosphothreonine" evidence="2">
    <location>
        <position position="187"/>
    </location>
</feature>
<feature type="modified residue" description="Phosphoserine" evidence="6 8 9">
    <location>
        <position position="206"/>
    </location>
</feature>
<feature type="modified residue" description="Phosphoserine" evidence="2">
    <location>
        <position position="209"/>
    </location>
</feature>
<reference key="1">
    <citation type="journal article" date="2005" name="Science">
        <title>The transcriptional landscape of the mammalian genome.</title>
        <authorList>
            <person name="Carninci P."/>
            <person name="Kasukawa T."/>
            <person name="Katayama S."/>
            <person name="Gough J."/>
            <person name="Frith M.C."/>
            <person name="Maeda N."/>
            <person name="Oyama R."/>
            <person name="Ravasi T."/>
            <person name="Lenhard B."/>
            <person name="Wells C."/>
            <person name="Kodzius R."/>
            <person name="Shimokawa K."/>
            <person name="Bajic V.B."/>
            <person name="Brenner S.E."/>
            <person name="Batalov S."/>
            <person name="Forrest A.R."/>
            <person name="Zavolan M."/>
            <person name="Davis M.J."/>
            <person name="Wilming L.G."/>
            <person name="Aidinis V."/>
            <person name="Allen J.E."/>
            <person name="Ambesi-Impiombato A."/>
            <person name="Apweiler R."/>
            <person name="Aturaliya R.N."/>
            <person name="Bailey T.L."/>
            <person name="Bansal M."/>
            <person name="Baxter L."/>
            <person name="Beisel K.W."/>
            <person name="Bersano T."/>
            <person name="Bono H."/>
            <person name="Chalk A.M."/>
            <person name="Chiu K.P."/>
            <person name="Choudhary V."/>
            <person name="Christoffels A."/>
            <person name="Clutterbuck D.R."/>
            <person name="Crowe M.L."/>
            <person name="Dalla E."/>
            <person name="Dalrymple B.P."/>
            <person name="de Bono B."/>
            <person name="Della Gatta G."/>
            <person name="di Bernardo D."/>
            <person name="Down T."/>
            <person name="Engstrom P."/>
            <person name="Fagiolini M."/>
            <person name="Faulkner G."/>
            <person name="Fletcher C.F."/>
            <person name="Fukushima T."/>
            <person name="Furuno M."/>
            <person name="Futaki S."/>
            <person name="Gariboldi M."/>
            <person name="Georgii-Hemming P."/>
            <person name="Gingeras T.R."/>
            <person name="Gojobori T."/>
            <person name="Green R.E."/>
            <person name="Gustincich S."/>
            <person name="Harbers M."/>
            <person name="Hayashi Y."/>
            <person name="Hensch T.K."/>
            <person name="Hirokawa N."/>
            <person name="Hill D."/>
            <person name="Huminiecki L."/>
            <person name="Iacono M."/>
            <person name="Ikeo K."/>
            <person name="Iwama A."/>
            <person name="Ishikawa T."/>
            <person name="Jakt M."/>
            <person name="Kanapin A."/>
            <person name="Katoh M."/>
            <person name="Kawasawa Y."/>
            <person name="Kelso J."/>
            <person name="Kitamura H."/>
            <person name="Kitano H."/>
            <person name="Kollias G."/>
            <person name="Krishnan S.P."/>
            <person name="Kruger A."/>
            <person name="Kummerfeld S.K."/>
            <person name="Kurochkin I.V."/>
            <person name="Lareau L.F."/>
            <person name="Lazarevic D."/>
            <person name="Lipovich L."/>
            <person name="Liu J."/>
            <person name="Liuni S."/>
            <person name="McWilliam S."/>
            <person name="Madan Babu M."/>
            <person name="Madera M."/>
            <person name="Marchionni L."/>
            <person name="Matsuda H."/>
            <person name="Matsuzawa S."/>
            <person name="Miki H."/>
            <person name="Mignone F."/>
            <person name="Miyake S."/>
            <person name="Morris K."/>
            <person name="Mottagui-Tabar S."/>
            <person name="Mulder N."/>
            <person name="Nakano N."/>
            <person name="Nakauchi H."/>
            <person name="Ng P."/>
            <person name="Nilsson R."/>
            <person name="Nishiguchi S."/>
            <person name="Nishikawa S."/>
            <person name="Nori F."/>
            <person name="Ohara O."/>
            <person name="Okazaki Y."/>
            <person name="Orlando V."/>
            <person name="Pang K.C."/>
            <person name="Pavan W.J."/>
            <person name="Pavesi G."/>
            <person name="Pesole G."/>
            <person name="Petrovsky N."/>
            <person name="Piazza S."/>
            <person name="Reed J."/>
            <person name="Reid J.F."/>
            <person name="Ring B.Z."/>
            <person name="Ringwald M."/>
            <person name="Rost B."/>
            <person name="Ruan Y."/>
            <person name="Salzberg S.L."/>
            <person name="Sandelin A."/>
            <person name="Schneider C."/>
            <person name="Schoenbach C."/>
            <person name="Sekiguchi K."/>
            <person name="Semple C.A."/>
            <person name="Seno S."/>
            <person name="Sessa L."/>
            <person name="Sheng Y."/>
            <person name="Shibata Y."/>
            <person name="Shimada H."/>
            <person name="Shimada K."/>
            <person name="Silva D."/>
            <person name="Sinclair B."/>
            <person name="Sperling S."/>
            <person name="Stupka E."/>
            <person name="Sugiura K."/>
            <person name="Sultana R."/>
            <person name="Takenaka Y."/>
            <person name="Taki K."/>
            <person name="Tammoja K."/>
            <person name="Tan S.L."/>
            <person name="Tang S."/>
            <person name="Taylor M.S."/>
            <person name="Tegner J."/>
            <person name="Teichmann S.A."/>
            <person name="Ueda H.R."/>
            <person name="van Nimwegen E."/>
            <person name="Verardo R."/>
            <person name="Wei C.L."/>
            <person name="Yagi K."/>
            <person name="Yamanishi H."/>
            <person name="Zabarovsky E."/>
            <person name="Zhu S."/>
            <person name="Zimmer A."/>
            <person name="Hide W."/>
            <person name="Bult C."/>
            <person name="Grimmond S.M."/>
            <person name="Teasdale R.D."/>
            <person name="Liu E.T."/>
            <person name="Brusic V."/>
            <person name="Quackenbush J."/>
            <person name="Wahlestedt C."/>
            <person name="Mattick J.S."/>
            <person name="Hume D.A."/>
            <person name="Kai C."/>
            <person name="Sasaki D."/>
            <person name="Tomaru Y."/>
            <person name="Fukuda S."/>
            <person name="Kanamori-Katayama M."/>
            <person name="Suzuki M."/>
            <person name="Aoki J."/>
            <person name="Arakawa T."/>
            <person name="Iida J."/>
            <person name="Imamura K."/>
            <person name="Itoh M."/>
            <person name="Kato T."/>
            <person name="Kawaji H."/>
            <person name="Kawagashira N."/>
            <person name="Kawashima T."/>
            <person name="Kojima M."/>
            <person name="Kondo S."/>
            <person name="Konno H."/>
            <person name="Nakano K."/>
            <person name="Ninomiya N."/>
            <person name="Nishio T."/>
            <person name="Okada M."/>
            <person name="Plessy C."/>
            <person name="Shibata K."/>
            <person name="Shiraki T."/>
            <person name="Suzuki S."/>
            <person name="Tagami M."/>
            <person name="Waki K."/>
            <person name="Watahiki A."/>
            <person name="Okamura-Oho Y."/>
            <person name="Suzuki H."/>
            <person name="Kawai J."/>
            <person name="Hayashizaki Y."/>
        </authorList>
    </citation>
    <scope>NUCLEOTIDE SEQUENCE [LARGE SCALE MRNA]</scope>
    <source>
        <strain>C57BL/6J</strain>
    </source>
</reference>
<reference key="2">
    <citation type="journal article" date="2004" name="Genome Res.">
        <title>The status, quality, and expansion of the NIH full-length cDNA project: the Mammalian Gene Collection (MGC).</title>
        <authorList>
            <consortium name="The MGC Project Team"/>
        </authorList>
    </citation>
    <scope>NUCLEOTIDE SEQUENCE [LARGE SCALE MRNA]</scope>
    <source>
        <strain>FVB/N</strain>
        <tissue>Mammary tumor</tissue>
    </source>
</reference>
<reference key="3">
    <citation type="journal article" date="2004" name="Mol. Cell. Proteomics">
        <title>Phosphoproteomic analysis of the developing mouse brain.</title>
        <authorList>
            <person name="Ballif B.A."/>
            <person name="Villen J."/>
            <person name="Beausoleil S.A."/>
            <person name="Schwartz D."/>
            <person name="Gygi S.P."/>
        </authorList>
    </citation>
    <scope>PHOSPHORYLATION [LARGE SCALE ANALYSIS] AT SER-206</scope>
    <scope>IDENTIFICATION BY MASS SPECTROMETRY [LARGE SCALE ANALYSIS]</scope>
    <source>
        <tissue>Embryonic brain</tissue>
    </source>
</reference>
<reference key="4">
    <citation type="journal article" date="2008" name="J. Proteome Res.">
        <title>Specific phosphopeptide enrichment with immobilized titanium ion affinity chromatography adsorbent for phosphoproteome analysis.</title>
        <authorList>
            <person name="Zhou H."/>
            <person name="Ye M."/>
            <person name="Dong J."/>
            <person name="Han G."/>
            <person name="Jiang X."/>
            <person name="Wu R."/>
            <person name="Zou H."/>
        </authorList>
    </citation>
    <scope>PHOSPHORYLATION [LARGE SCALE ANALYSIS] AT SER-180</scope>
    <scope>IDENTIFICATION BY MASS SPECTROMETRY [LARGE SCALE ANALYSIS]</scope>
    <source>
        <tissue>Liver</tissue>
    </source>
</reference>
<reference key="5">
    <citation type="journal article" date="2009" name="Mol. Cell. Proteomics">
        <title>Large scale localization of protein phosphorylation by use of electron capture dissociation mass spectrometry.</title>
        <authorList>
            <person name="Sweet S.M."/>
            <person name="Bailey C.M."/>
            <person name="Cunningham D.L."/>
            <person name="Heath J.K."/>
            <person name="Cooper H.J."/>
        </authorList>
    </citation>
    <scope>PHOSPHORYLATION [LARGE SCALE ANALYSIS] AT SER-180 AND SER-206</scope>
    <scope>IDENTIFICATION BY MASS SPECTROMETRY [LARGE SCALE ANALYSIS]</scope>
    <source>
        <tissue>Embryonic fibroblast</tissue>
    </source>
</reference>
<reference key="6">
    <citation type="journal article" date="2010" name="Cell">
        <title>A tissue-specific atlas of mouse protein phosphorylation and expression.</title>
        <authorList>
            <person name="Huttlin E.L."/>
            <person name="Jedrychowski M.P."/>
            <person name="Elias J.E."/>
            <person name="Goswami T."/>
            <person name="Rad R."/>
            <person name="Beausoleil S.A."/>
            <person name="Villen J."/>
            <person name="Haas W."/>
            <person name="Sowa M.E."/>
            <person name="Gygi S.P."/>
        </authorList>
    </citation>
    <scope>PHOSPHORYLATION [LARGE SCALE ANALYSIS] AT SER-96; SER-168; SER-180 AND SER-206</scope>
    <scope>IDENTIFICATION BY MASS SPECTROMETRY [LARGE SCALE ANALYSIS]</scope>
    <source>
        <tissue>Brain</tissue>
        <tissue>Brown adipose tissue</tissue>
        <tissue>Heart</tissue>
        <tissue>Kidney</tissue>
        <tissue>Liver</tissue>
        <tissue>Lung</tissue>
        <tissue>Pancreas</tissue>
        <tissue>Spleen</tissue>
        <tissue>Testis</tissue>
    </source>
</reference>
<organism>
    <name type="scientific">Mus musculus</name>
    <name type="common">Mouse</name>
    <dbReference type="NCBI Taxonomy" id="10090"/>
    <lineage>
        <taxon>Eukaryota</taxon>
        <taxon>Metazoa</taxon>
        <taxon>Chordata</taxon>
        <taxon>Craniata</taxon>
        <taxon>Vertebrata</taxon>
        <taxon>Euteleostomi</taxon>
        <taxon>Mammalia</taxon>
        <taxon>Eutheria</taxon>
        <taxon>Euarchontoglires</taxon>
        <taxon>Glires</taxon>
        <taxon>Rodentia</taxon>
        <taxon>Myomorpha</taxon>
        <taxon>Muroidea</taxon>
        <taxon>Muridae</taxon>
        <taxon>Murinae</taxon>
        <taxon>Mus</taxon>
        <taxon>Mus</taxon>
    </lineage>
</organism>
<evidence type="ECO:0000250" key="1"/>
<evidence type="ECO:0000250" key="2">
    <source>
        <dbReference type="UniProtKB" id="O43399"/>
    </source>
</evidence>
<evidence type="ECO:0000255" key="3"/>
<evidence type="ECO:0000256" key="4">
    <source>
        <dbReference type="SAM" id="MobiDB-lite"/>
    </source>
</evidence>
<evidence type="ECO:0000305" key="5"/>
<evidence type="ECO:0007744" key="6">
    <source>
    </source>
</evidence>
<evidence type="ECO:0007744" key="7">
    <source>
    </source>
</evidence>
<evidence type="ECO:0007744" key="8">
    <source>
    </source>
</evidence>
<evidence type="ECO:0007744" key="9">
    <source>
    </source>
</evidence>
<name>TPD54_MOUSE</name>
<proteinExistence type="evidence at protein level"/>